<keyword id="KW-0002">3D-structure</keyword>
<keyword id="KW-0240">DNA-directed RNA polymerase</keyword>
<keyword id="KW-0479">Metal-binding</keyword>
<keyword id="KW-0539">Nucleus</keyword>
<keyword id="KW-1185">Reference proteome</keyword>
<keyword id="KW-0804">Transcription</keyword>
<keyword id="KW-0862">Zinc</keyword>
<accession>Q32P78</accession>
<proteinExistence type="evidence at protein level"/>
<sequence>MIIPVRCFTCGKIVGNKWEAYLGLLQAEYTEGDALDALGLKRYCCRRMLLAHVDLIEKLLNYAPLEK</sequence>
<dbReference type="EMBL" id="BC108227">
    <property type="protein sequence ID" value="AAI08228.1"/>
    <property type="molecule type" value="mRNA"/>
</dbReference>
<dbReference type="RefSeq" id="NP_001107198.1">
    <property type="nucleotide sequence ID" value="NM_001113726.1"/>
</dbReference>
<dbReference type="PDB" id="5FLM">
    <property type="method" value="EM"/>
    <property type="resolution" value="3.40 A"/>
    <property type="chains" value="J=1-67"/>
</dbReference>
<dbReference type="PDB" id="5OIK">
    <property type="method" value="EM"/>
    <property type="resolution" value="3.70 A"/>
    <property type="chains" value="J=1-67"/>
</dbReference>
<dbReference type="PDBsum" id="5FLM"/>
<dbReference type="PDBsum" id="5OIK"/>
<dbReference type="EMDB" id="EMD-3817"/>
<dbReference type="SMR" id="Q32P78"/>
<dbReference type="DIP" id="DIP-61195N"/>
<dbReference type="FunCoup" id="Q32P78">
    <property type="interactions" value="1464"/>
</dbReference>
<dbReference type="IntAct" id="Q32P78">
    <property type="interactions" value="3"/>
</dbReference>
<dbReference type="STRING" id="9913.ENSBTAP00000041501"/>
<dbReference type="PaxDb" id="9913-ENSBTAP00000041501"/>
<dbReference type="Ensembl" id="ENSBTAT00000043971.2">
    <property type="protein sequence ID" value="ENSBTAP00000041501.1"/>
    <property type="gene ID" value="ENSBTAG00000031061.2"/>
</dbReference>
<dbReference type="GeneID" id="617375"/>
<dbReference type="KEGG" id="bta:617375"/>
<dbReference type="CTD" id="5441"/>
<dbReference type="VEuPathDB" id="HostDB:ENSBTAG00000031061"/>
<dbReference type="VGNC" id="VGNC:33144">
    <property type="gene designation" value="POLR2L"/>
</dbReference>
<dbReference type="eggNOG" id="KOG3497">
    <property type="taxonomic scope" value="Eukaryota"/>
</dbReference>
<dbReference type="GeneTree" id="ENSGT00390000007087"/>
<dbReference type="HOGENOM" id="CLU_143122_1_1_1"/>
<dbReference type="InParanoid" id="Q32P78"/>
<dbReference type="OMA" id="YCCRRMF"/>
<dbReference type="OrthoDB" id="10258858at2759"/>
<dbReference type="TreeFam" id="TF103046"/>
<dbReference type="Reactome" id="R-BTA-112382">
    <property type="pathway name" value="Formation of RNA Pol II elongation complex"/>
</dbReference>
<dbReference type="Reactome" id="R-BTA-113418">
    <property type="pathway name" value="Formation of the Early Elongation Complex"/>
</dbReference>
<dbReference type="Reactome" id="R-BTA-5250924">
    <property type="pathway name" value="B-WICH complex positively regulates rRNA expression"/>
</dbReference>
<dbReference type="Reactome" id="R-BTA-5578749">
    <property type="pathway name" value="Transcriptional regulation by small RNAs"/>
</dbReference>
<dbReference type="Reactome" id="R-BTA-674695">
    <property type="pathway name" value="RNA Polymerase II Pre-transcription Events"/>
</dbReference>
<dbReference type="Reactome" id="R-BTA-6781823">
    <property type="pathway name" value="Formation of TC-NER Pre-Incision Complex"/>
</dbReference>
<dbReference type="Reactome" id="R-BTA-6782135">
    <property type="pathway name" value="Dual incision in TC-NER"/>
</dbReference>
<dbReference type="Reactome" id="R-BTA-6782210">
    <property type="pathway name" value="Gap-filling DNA repair synthesis and ligation in TC-NER"/>
</dbReference>
<dbReference type="Reactome" id="R-BTA-6796648">
    <property type="pathway name" value="TP53 Regulates Transcription of DNA Repair Genes"/>
</dbReference>
<dbReference type="Reactome" id="R-BTA-6803529">
    <property type="pathway name" value="FGFR2 alternative splicing"/>
</dbReference>
<dbReference type="Reactome" id="R-BTA-6807505">
    <property type="pathway name" value="RNA polymerase II transcribes snRNA genes"/>
</dbReference>
<dbReference type="Reactome" id="R-BTA-72086">
    <property type="pathway name" value="mRNA Capping"/>
</dbReference>
<dbReference type="Reactome" id="R-BTA-72163">
    <property type="pathway name" value="mRNA Splicing - Major Pathway"/>
</dbReference>
<dbReference type="Reactome" id="R-BTA-72165">
    <property type="pathway name" value="mRNA Splicing - Minor Pathway"/>
</dbReference>
<dbReference type="Reactome" id="R-BTA-72203">
    <property type="pathway name" value="Processing of Capped Intron-Containing Pre-mRNA"/>
</dbReference>
<dbReference type="Reactome" id="R-BTA-73762">
    <property type="pathway name" value="RNA Polymerase I Transcription Initiation"/>
</dbReference>
<dbReference type="Reactome" id="R-BTA-73772">
    <property type="pathway name" value="RNA Polymerase I Promoter Escape"/>
</dbReference>
<dbReference type="Reactome" id="R-BTA-73776">
    <property type="pathway name" value="RNA Polymerase II Promoter Escape"/>
</dbReference>
<dbReference type="Reactome" id="R-BTA-73779">
    <property type="pathway name" value="RNA Polymerase II Transcription Pre-Initiation And Promoter Opening"/>
</dbReference>
<dbReference type="Reactome" id="R-BTA-73863">
    <property type="pathway name" value="RNA Polymerase I Transcription Termination"/>
</dbReference>
<dbReference type="Reactome" id="R-BTA-75953">
    <property type="pathway name" value="RNA Polymerase II Transcription Initiation"/>
</dbReference>
<dbReference type="Reactome" id="R-BTA-75955">
    <property type="pathway name" value="RNA Polymerase II Transcription Elongation"/>
</dbReference>
<dbReference type="Reactome" id="R-BTA-76042">
    <property type="pathway name" value="RNA Polymerase II Transcription Initiation And Promoter Clearance"/>
</dbReference>
<dbReference type="Reactome" id="R-BTA-76061">
    <property type="pathway name" value="RNA Polymerase III Transcription Initiation From Type 1 Promoter"/>
</dbReference>
<dbReference type="Reactome" id="R-BTA-76066">
    <property type="pathway name" value="RNA Polymerase III Transcription Initiation From Type 2 Promoter"/>
</dbReference>
<dbReference type="Reactome" id="R-BTA-76071">
    <property type="pathway name" value="RNA Polymerase III Transcription Initiation From Type 3 Promoter"/>
</dbReference>
<dbReference type="Reactome" id="R-BTA-77075">
    <property type="pathway name" value="RNA Pol II CTD phosphorylation and interaction with CE"/>
</dbReference>
<dbReference type="Reactome" id="R-BTA-9018519">
    <property type="pathway name" value="Estrogen-dependent gene expression"/>
</dbReference>
<dbReference type="EvolutionaryTrace" id="Q32P78"/>
<dbReference type="Proteomes" id="UP000009136">
    <property type="component" value="Chromosome 29"/>
</dbReference>
<dbReference type="Bgee" id="ENSBTAG00000031061">
    <property type="expression patterns" value="Expressed in laryngeal cartilage and 110 other cell types or tissues"/>
</dbReference>
<dbReference type="GO" id="GO:0005634">
    <property type="term" value="C:nucleus"/>
    <property type="evidence" value="ECO:0000250"/>
    <property type="project" value="UniProtKB"/>
</dbReference>
<dbReference type="GO" id="GO:0005736">
    <property type="term" value="C:RNA polymerase I complex"/>
    <property type="evidence" value="ECO:0000318"/>
    <property type="project" value="GO_Central"/>
</dbReference>
<dbReference type="GO" id="GO:0005665">
    <property type="term" value="C:RNA polymerase II, core complex"/>
    <property type="evidence" value="ECO:0000314"/>
    <property type="project" value="UniProtKB"/>
</dbReference>
<dbReference type="GO" id="GO:0005666">
    <property type="term" value="C:RNA polymerase III complex"/>
    <property type="evidence" value="ECO:0000318"/>
    <property type="project" value="GO_Central"/>
</dbReference>
<dbReference type="GO" id="GO:0003677">
    <property type="term" value="F:DNA binding"/>
    <property type="evidence" value="ECO:0007669"/>
    <property type="project" value="InterPro"/>
</dbReference>
<dbReference type="GO" id="GO:0003899">
    <property type="term" value="F:DNA-directed RNA polymerase activity"/>
    <property type="evidence" value="ECO:0007669"/>
    <property type="project" value="InterPro"/>
</dbReference>
<dbReference type="GO" id="GO:0008270">
    <property type="term" value="F:zinc ion binding"/>
    <property type="evidence" value="ECO:0000314"/>
    <property type="project" value="UniProtKB"/>
</dbReference>
<dbReference type="GO" id="GO:0006360">
    <property type="term" value="P:transcription by RNA polymerase I"/>
    <property type="evidence" value="ECO:0000318"/>
    <property type="project" value="GO_Central"/>
</dbReference>
<dbReference type="GO" id="GO:0006366">
    <property type="term" value="P:transcription by RNA polymerase II"/>
    <property type="evidence" value="ECO:0000250"/>
    <property type="project" value="UniProtKB"/>
</dbReference>
<dbReference type="GO" id="GO:0042797">
    <property type="term" value="P:tRNA transcription by RNA polymerase III"/>
    <property type="evidence" value="ECO:0000318"/>
    <property type="project" value="GO_Central"/>
</dbReference>
<dbReference type="FunFam" id="1.10.10.60:FF:000024">
    <property type="entry name" value="DNA-directed RNA polymerases I, II, and III subunit"/>
    <property type="match status" value="1"/>
</dbReference>
<dbReference type="Gene3D" id="1.10.10.60">
    <property type="entry name" value="Homeodomain-like"/>
    <property type="match status" value="1"/>
</dbReference>
<dbReference type="HAMAP" id="MF_00250">
    <property type="entry name" value="RNApol_arch_Rpo10"/>
    <property type="match status" value="1"/>
</dbReference>
<dbReference type="InterPro" id="IPR023580">
    <property type="entry name" value="RNA_pol_su_RPB10"/>
</dbReference>
<dbReference type="InterPro" id="IPR020789">
    <property type="entry name" value="RNA_pol_suN_Zn-BS"/>
</dbReference>
<dbReference type="InterPro" id="IPR000268">
    <property type="entry name" value="RPABC5/Rpb10"/>
</dbReference>
<dbReference type="NCBIfam" id="NF003089">
    <property type="entry name" value="PRK04016.1"/>
    <property type="match status" value="1"/>
</dbReference>
<dbReference type="PANTHER" id="PTHR23431:SF11">
    <property type="entry name" value="DNA-DIRECTED RNA POLYMERASES I, II, AND III SUBUNIT RPABC5"/>
    <property type="match status" value="1"/>
</dbReference>
<dbReference type="PANTHER" id="PTHR23431">
    <property type="entry name" value="DNA-DIRECTED RNA POLYMERASES I, II, AND III SUBUNIT RPABC5 FAMILY MEMBER"/>
    <property type="match status" value="1"/>
</dbReference>
<dbReference type="Pfam" id="PF01194">
    <property type="entry name" value="RNA_pol_N"/>
    <property type="match status" value="1"/>
</dbReference>
<dbReference type="PIRSF" id="PIRSF005653">
    <property type="entry name" value="RNA_pol_N/8_sub"/>
    <property type="match status" value="1"/>
</dbReference>
<dbReference type="SUPFAM" id="SSF46924">
    <property type="entry name" value="RNA polymerase subunit RPB10"/>
    <property type="match status" value="1"/>
</dbReference>
<dbReference type="PROSITE" id="PS01112">
    <property type="entry name" value="RNA_POL_N_8KD"/>
    <property type="match status" value="1"/>
</dbReference>
<feature type="chain" id="PRO_0000291377" description="DNA-directed RNA polymerases I, II, and III subunit RPABC5">
    <location>
        <begin position="1"/>
        <end position="67"/>
    </location>
</feature>
<feature type="binding site" evidence="3 4 6 7">
    <location>
        <position position="7"/>
    </location>
    <ligand>
        <name>Zn(2+)</name>
        <dbReference type="ChEBI" id="CHEBI:29105"/>
    </ligand>
</feature>
<feature type="binding site" evidence="3 4 6 7">
    <location>
        <position position="10"/>
    </location>
    <ligand>
        <name>Zn(2+)</name>
        <dbReference type="ChEBI" id="CHEBI:29105"/>
    </ligand>
</feature>
<feature type="binding site" evidence="3 4 6 7">
    <location>
        <position position="44"/>
    </location>
    <ligand>
        <name>Zn(2+)</name>
        <dbReference type="ChEBI" id="CHEBI:29105"/>
    </ligand>
</feature>
<feature type="binding site" evidence="3 4 6 7">
    <location>
        <position position="45"/>
    </location>
    <ligand>
        <name>Zn(2+)</name>
        <dbReference type="ChEBI" id="CHEBI:29105"/>
    </ligand>
</feature>
<feature type="turn" evidence="8">
    <location>
        <begin position="8"/>
        <end position="10"/>
    </location>
</feature>
<feature type="helix" evidence="8">
    <location>
        <begin position="18"/>
        <end position="27"/>
    </location>
</feature>
<feature type="helix" evidence="8">
    <location>
        <begin position="31"/>
        <end position="37"/>
    </location>
</feature>
<feature type="helix" evidence="8">
    <location>
        <begin position="43"/>
        <end position="50"/>
    </location>
</feature>
<feature type="helix" evidence="8">
    <location>
        <begin position="56"/>
        <end position="59"/>
    </location>
</feature>
<gene>
    <name type="primary">POLR2L</name>
</gene>
<evidence type="ECO:0000250" key="1">
    <source>
        <dbReference type="UniProtKB" id="P62875"/>
    </source>
</evidence>
<evidence type="ECO:0000269" key="2">
    <source>
    </source>
</evidence>
<evidence type="ECO:0000269" key="3">
    <source>
    </source>
</evidence>
<evidence type="ECO:0000269" key="4">
    <source>
    </source>
</evidence>
<evidence type="ECO:0000305" key="5"/>
<evidence type="ECO:0007744" key="6">
    <source>
        <dbReference type="PDB" id="5FLM"/>
    </source>
</evidence>
<evidence type="ECO:0007744" key="7">
    <source>
        <dbReference type="PDB" id="5OIK"/>
    </source>
</evidence>
<evidence type="ECO:0007829" key="8">
    <source>
        <dbReference type="PDB" id="5FLM"/>
    </source>
</evidence>
<comment type="function">
    <text evidence="1 2 3">DNA-dependent RNA polymerase catalyzes the transcription of DNA into RNA using the four ribonucleoside triphosphates as substrates. Common component of RNA polymerases I, II and III which synthesize ribosomal RNA precursors, mRNA precursors and many functional non-coding RNAs, and a small RNAs, such as 5S rRNA and tRNAs, respectively.</text>
</comment>
<comment type="subunit">
    <text evidence="1 2 3 4">Component of the RNA polymerase I (Pol I), RNA polymerase II (Pol II) and RNA polymerase III (Pol III) complexes consisting of at least 13, 12 and 17 subunits, respectively (By similarity) (PubMed:26789250, PubMed:28892040). Pol I complex consists of a ten-subunit catalytic core composed of POLR1A/RPA1, POLR1B/RPA2, POLR1C/RPAC1, POLR1D/RPAC2, POLR1H/RPA12, POLR2E/RPABC1, POLR2F/RPABC2, POLR2H/RPABC3, POLR2K/RPABC4 and POLR2L/RPABC5; a mobile stalk subunit POLR1F/RPA43 protruding from the core and additional subunits homologous to general transcription factors POLR1E/RPA49 and POLR1G/RPA34. Part of Pol I pre-initiation complex (PIC), in which Pol I core assembles with RRN3 and promoter-bound UTBF and SL1/TIF-IB complex (By similarity). Pol II complex contains a ten-subunit catalytic core composed of POLR2A/RPB1, POLR2B/RPB2, POLR2C/RPB3, POLR2I/RPB9, POLR2J/RPB11, POLR2E/RPABC1, POLR2F/RPABC2, POLR2H/RPABC3, POLR2K/RPABC4 and POLR2L/RPABC5 and a mobile stalk composed of two subunits POLR2D/RPB4 and POLR2G/RPB7. Part of Pol II(G) complex, in which Pol II core associates with an additional subunit POLR2M; unlike conventional Pol II, Pol II(G) functions as a transcriptional repressor. Part of TBP-based Pol II pre-initiation complex (PIC), in which Pol II core assembles with general transcription factors and other specific initiation factors including GTF2E1, GTF2E2, GTF2F1, GTF2F2, TCEA1, ERCC2, ERCC3, GTF2H2, GTF2H3, GTF2H4, GTF2H5, GTF2A1, GTF2A2, GTF2B and TBP; this large multi-subunit PIC complex mediates DNA unwinding and targets Pol II core to the transcription start site where the first phosphodiester bond forms (PubMed:16769904, PubMed:26789250, PubMed:28892040). Pol III complex consists of a ten-subunit catalytic core composed of POLR3A/RPC1, POLR3B/RPC2, POLR1C/RPAC1, POLR1D/RPAC2, POLR3K/RPC10, POLR2E/RPABC1, POLR2F/RPABC2, POLR2H/RPABC3, POLR2K/RPABC4 and POLR2L/RPABC5; a mobile stalk composed of two subunits POLR3H/RPC8 and CRCP/RPC9, protruding from the core and functioning primarily in transcription initiation; and additional subunits homologous to general transcription factors of the RNA polymerase II machinery, POLR3C/RPC3-POLR3F/RPC6-POLR3G/RPC7 heterotrimer required for transcription initiation and POLR3D/RPC4-POLR3E/RPC5 heterodimer involved in both transcription initiation and termination (PubMed:26789250, PubMed:28892040).</text>
</comment>
<comment type="subcellular location">
    <subcellularLocation>
        <location evidence="1">Nucleus</location>
    </subcellularLocation>
    <subcellularLocation>
        <location evidence="1">Nucleus</location>
        <location evidence="1">Nucleolus</location>
    </subcellularLocation>
</comment>
<comment type="similarity">
    <text evidence="5">Belongs to the archaeal Rpo10/eukaryotic RPB10 RNA polymerase subunit family.</text>
</comment>
<name>RPAB5_BOVIN</name>
<organism>
    <name type="scientific">Bos taurus</name>
    <name type="common">Bovine</name>
    <dbReference type="NCBI Taxonomy" id="9913"/>
    <lineage>
        <taxon>Eukaryota</taxon>
        <taxon>Metazoa</taxon>
        <taxon>Chordata</taxon>
        <taxon>Craniata</taxon>
        <taxon>Vertebrata</taxon>
        <taxon>Euteleostomi</taxon>
        <taxon>Mammalia</taxon>
        <taxon>Eutheria</taxon>
        <taxon>Laurasiatheria</taxon>
        <taxon>Artiodactyla</taxon>
        <taxon>Ruminantia</taxon>
        <taxon>Pecora</taxon>
        <taxon>Bovidae</taxon>
        <taxon>Bovinae</taxon>
        <taxon>Bos</taxon>
    </lineage>
</organism>
<reference key="1">
    <citation type="submission" date="2005-10" db="EMBL/GenBank/DDBJ databases">
        <authorList>
            <consortium name="NIH - Mammalian Gene Collection (MGC) project"/>
        </authorList>
    </citation>
    <scope>NUCLEOTIDE SEQUENCE [LARGE SCALE MRNA]</scope>
    <source>
        <strain>Crossbred X Angus</strain>
        <tissue>Liver</tissue>
    </source>
</reference>
<reference key="2">
    <citation type="journal article" date="2006" name="Proc. Natl. Acad. Sci. U.S.A.">
        <title>A Mediator-responsive form of metazoan RNA polymerase II.</title>
        <authorList>
            <person name="Hu X."/>
            <person name="Malik S."/>
            <person name="Negroiu C.C."/>
            <person name="Hubbard K."/>
            <person name="Velalar C.N."/>
            <person name="Hampton B."/>
            <person name="Grosu D."/>
            <person name="Catalano J."/>
            <person name="Roeder R.G."/>
            <person name="Gnatt A."/>
        </authorList>
    </citation>
    <scope>FUNCTION</scope>
    <scope>SUBUNIT</scope>
    <scope>IDENTIFICATION IN THE POL II AND POL II(G) COMPLEXES</scope>
</reference>
<reference key="3">
    <citation type="journal article" date="2016" name="Nature">
        <title>Structure of transcribing mammalian RNA polymerase II.</title>
        <authorList>
            <person name="Bernecky C."/>
            <person name="Herzog F."/>
            <person name="Baumeister W."/>
            <person name="Plitzko J.M."/>
            <person name="Cramer P."/>
        </authorList>
    </citation>
    <scope>STRUCTURE BY ELECTRON MICROSCOPY (3.40 ANGSTROMS)</scope>
    <scope>SUBUNIT</scope>
    <scope>FUNCTION OF POL II</scope>
</reference>
<reference key="4">
    <citation type="journal article" date="2017" name="Nat. Struct. Mol. Biol.">
        <title>Structure of a transcribing RNA polymerase II-DSIF complex reveals a multidentate DNA-RNA clamp.</title>
        <authorList>
            <person name="Bernecky C."/>
            <person name="Plitzko J.M."/>
            <person name="Cramer P."/>
        </authorList>
    </citation>
    <scope>STRUCTURE BY ELECTRON MICROSCOPY (3.70 ANGSTROMS)</scope>
    <scope>SUBUNIT</scope>
</reference>
<protein>
    <recommendedName>
        <fullName>DNA-directed RNA polymerases I, II, and III subunit RPABC5</fullName>
        <shortName>RNA polymerases I, II, and III subunit ABC5</shortName>
    </recommendedName>
    <alternativeName>
        <fullName>DNA-directed RNA polymerase III subunit L</fullName>
    </alternativeName>
</protein>